<comment type="function">
    <text evidence="1">Catalyzes the attachment of proline to tRNA(Pro) in a two-step reaction: proline is first activated by ATP to form Pro-AMP and then transferred to the acceptor end of tRNA(Pro).</text>
</comment>
<comment type="catalytic activity">
    <reaction evidence="1">
        <text>tRNA(Pro) + L-proline + ATP = L-prolyl-tRNA(Pro) + AMP + diphosphate</text>
        <dbReference type="Rhea" id="RHEA:14305"/>
        <dbReference type="Rhea" id="RHEA-COMP:9700"/>
        <dbReference type="Rhea" id="RHEA-COMP:9702"/>
        <dbReference type="ChEBI" id="CHEBI:30616"/>
        <dbReference type="ChEBI" id="CHEBI:33019"/>
        <dbReference type="ChEBI" id="CHEBI:60039"/>
        <dbReference type="ChEBI" id="CHEBI:78442"/>
        <dbReference type="ChEBI" id="CHEBI:78532"/>
        <dbReference type="ChEBI" id="CHEBI:456215"/>
        <dbReference type="EC" id="6.1.1.15"/>
    </reaction>
</comment>
<comment type="subunit">
    <text evidence="1">Homodimer.</text>
</comment>
<comment type="subcellular location">
    <subcellularLocation>
        <location evidence="1">Cytoplasm</location>
    </subcellularLocation>
</comment>
<comment type="domain">
    <text evidence="1">Consists of three domains: the N-terminal catalytic domain, the anticodon-binding domain and the C-terminal extension.</text>
</comment>
<comment type="similarity">
    <text evidence="1">Belongs to the class-II aminoacyl-tRNA synthetase family. ProS type 3 subfamily.</text>
</comment>
<keyword id="KW-0030">Aminoacyl-tRNA synthetase</keyword>
<keyword id="KW-0067">ATP-binding</keyword>
<keyword id="KW-0963">Cytoplasm</keyword>
<keyword id="KW-0436">Ligase</keyword>
<keyword id="KW-0547">Nucleotide-binding</keyword>
<keyword id="KW-0648">Protein biosynthesis</keyword>
<keyword id="KW-1185">Reference proteome</keyword>
<evidence type="ECO:0000255" key="1">
    <source>
        <dbReference type="HAMAP-Rule" id="MF_01571"/>
    </source>
</evidence>
<gene>
    <name evidence="1" type="primary">proS</name>
    <name type="ordered locus">Saro_1950</name>
</gene>
<sequence length="515" mass="57473">MNQPAIKHALNVKRADDFAQWYQAVIAEAELAEESGVRGCMVIKPWGYGIWERIQKLMDAEIKEAGVENCYFPLFIPLSYFTKEAEHVEGFAKEMAVVTHHRLISDGKGGLTPDPEAKLEEPLVVRPTSETVIGAAMSRWIQSWRDLPLLTNQWANVVRWEMRTRMFLRTSEFLWQEGHTAHVDEADAMKETLRALEMYRAFAEGPLAMPVIAGPKPENERFPGAVETFSIEAMMQDGKALQAGTSHYLGTTFAKAAGIQYQNKEGQQALAHTTSWGVSTRLIGGVIMTHGDDDGLRVPPQVAPQQIVILPMLRDNEGDDALLAYCEEIRASLVKLSVFGERIRVLLDKRPGKATQKRWAWVKKGMPLILEIGGRDAEGGLVSVLRRDRLWRQDAKPNFVGQAKDDFLASAATELESIQAALYDEARARRDAQIVRDVTDLEGLKGYFAEGNKYPGWVEMGWAKPTGEALDKVVEQLKALKLTIRNTPMDAEKPVGACPFTGEPAVEKILIARSY</sequence>
<proteinExistence type="inferred from homology"/>
<feature type="chain" id="PRO_0000249142" description="Proline--tRNA ligase">
    <location>
        <begin position="1"/>
        <end position="515"/>
    </location>
</feature>
<name>SYP_NOVAD</name>
<accession>Q2G6Y3</accession>
<organism>
    <name type="scientific">Novosphingobium aromaticivorans (strain ATCC 700278 / DSM 12444 / CCUG 56034 / CIP 105152 / NBRC 16084 / F199)</name>
    <dbReference type="NCBI Taxonomy" id="279238"/>
    <lineage>
        <taxon>Bacteria</taxon>
        <taxon>Pseudomonadati</taxon>
        <taxon>Pseudomonadota</taxon>
        <taxon>Alphaproteobacteria</taxon>
        <taxon>Sphingomonadales</taxon>
        <taxon>Sphingomonadaceae</taxon>
        <taxon>Novosphingobium</taxon>
    </lineage>
</organism>
<protein>
    <recommendedName>
        <fullName evidence="1">Proline--tRNA ligase</fullName>
        <ecNumber evidence="1">6.1.1.15</ecNumber>
    </recommendedName>
    <alternativeName>
        <fullName evidence="1">Prolyl-tRNA synthetase</fullName>
        <shortName evidence="1">ProRS</shortName>
    </alternativeName>
</protein>
<reference key="1">
    <citation type="submission" date="2006-01" db="EMBL/GenBank/DDBJ databases">
        <title>Complete sequence of Novosphingobium aromaticivorans DSM 12444.</title>
        <authorList>
            <consortium name="US DOE Joint Genome Institute"/>
            <person name="Copeland A."/>
            <person name="Lucas S."/>
            <person name="Lapidus A."/>
            <person name="Barry K."/>
            <person name="Detter J.C."/>
            <person name="Glavina T."/>
            <person name="Hammon N."/>
            <person name="Israni S."/>
            <person name="Pitluck S."/>
            <person name="Chain P."/>
            <person name="Malfatti S."/>
            <person name="Shin M."/>
            <person name="Vergez L."/>
            <person name="Schmutz J."/>
            <person name="Larimer F."/>
            <person name="Land M."/>
            <person name="Kyrpides N."/>
            <person name="Ivanova N."/>
            <person name="Fredrickson J."/>
            <person name="Balkwill D."/>
            <person name="Romine M.F."/>
            <person name="Richardson P."/>
        </authorList>
    </citation>
    <scope>NUCLEOTIDE SEQUENCE [LARGE SCALE GENOMIC DNA]</scope>
    <source>
        <strain>ATCC 700278 / DSM 12444 / CCUG 56034 / CIP 105152 / NBRC 16084 / F199</strain>
    </source>
</reference>
<dbReference type="EC" id="6.1.1.15" evidence="1"/>
<dbReference type="EMBL" id="CP000248">
    <property type="protein sequence ID" value="ABD26390.1"/>
    <property type="molecule type" value="Genomic_DNA"/>
</dbReference>
<dbReference type="RefSeq" id="WP_011445599.1">
    <property type="nucleotide sequence ID" value="NC_007794.1"/>
</dbReference>
<dbReference type="SMR" id="Q2G6Y3"/>
<dbReference type="STRING" id="279238.Saro_1950"/>
<dbReference type="KEGG" id="nar:Saro_1950"/>
<dbReference type="eggNOG" id="COG0442">
    <property type="taxonomic scope" value="Bacteria"/>
</dbReference>
<dbReference type="HOGENOM" id="CLU_001882_4_2_5"/>
<dbReference type="SABIO-RK" id="Q2G6Y3"/>
<dbReference type="Proteomes" id="UP000009134">
    <property type="component" value="Chromosome"/>
</dbReference>
<dbReference type="GO" id="GO:0017101">
    <property type="term" value="C:aminoacyl-tRNA synthetase multienzyme complex"/>
    <property type="evidence" value="ECO:0007669"/>
    <property type="project" value="TreeGrafter"/>
</dbReference>
<dbReference type="GO" id="GO:0005737">
    <property type="term" value="C:cytoplasm"/>
    <property type="evidence" value="ECO:0007669"/>
    <property type="project" value="UniProtKB-SubCell"/>
</dbReference>
<dbReference type="GO" id="GO:0005524">
    <property type="term" value="F:ATP binding"/>
    <property type="evidence" value="ECO:0007669"/>
    <property type="project" value="UniProtKB-UniRule"/>
</dbReference>
<dbReference type="GO" id="GO:0004827">
    <property type="term" value="F:proline-tRNA ligase activity"/>
    <property type="evidence" value="ECO:0007669"/>
    <property type="project" value="UniProtKB-UniRule"/>
</dbReference>
<dbReference type="GO" id="GO:0006433">
    <property type="term" value="P:prolyl-tRNA aminoacylation"/>
    <property type="evidence" value="ECO:0007669"/>
    <property type="project" value="UniProtKB-UniRule"/>
</dbReference>
<dbReference type="CDD" id="cd00778">
    <property type="entry name" value="ProRS_core_arch_euk"/>
    <property type="match status" value="1"/>
</dbReference>
<dbReference type="FunFam" id="3.30.930.10:FF:000037">
    <property type="entry name" value="Proline--tRNA ligase"/>
    <property type="match status" value="1"/>
</dbReference>
<dbReference type="Gene3D" id="3.40.50.800">
    <property type="entry name" value="Anticodon-binding domain"/>
    <property type="match status" value="1"/>
</dbReference>
<dbReference type="Gene3D" id="3.30.930.10">
    <property type="entry name" value="Bira Bifunctional Protein, Domain 2"/>
    <property type="match status" value="1"/>
</dbReference>
<dbReference type="Gene3D" id="3.30.110.30">
    <property type="entry name" value="C-terminal domain of ProRS"/>
    <property type="match status" value="1"/>
</dbReference>
<dbReference type="HAMAP" id="MF_01571">
    <property type="entry name" value="Pro_tRNA_synth_type3"/>
    <property type="match status" value="1"/>
</dbReference>
<dbReference type="InterPro" id="IPR002314">
    <property type="entry name" value="aa-tRNA-synt_IIb"/>
</dbReference>
<dbReference type="InterPro" id="IPR006195">
    <property type="entry name" value="aa-tRNA-synth_II"/>
</dbReference>
<dbReference type="InterPro" id="IPR045864">
    <property type="entry name" value="aa-tRNA-synth_II/BPL/LPL"/>
</dbReference>
<dbReference type="InterPro" id="IPR004154">
    <property type="entry name" value="Anticodon-bd"/>
</dbReference>
<dbReference type="InterPro" id="IPR036621">
    <property type="entry name" value="Anticodon-bd_dom_sf"/>
</dbReference>
<dbReference type="InterPro" id="IPR004499">
    <property type="entry name" value="Pro-tRNA-ligase_IIa_arc-type"/>
</dbReference>
<dbReference type="InterPro" id="IPR016061">
    <property type="entry name" value="Pro-tRNA_ligase_II_C"/>
</dbReference>
<dbReference type="InterPro" id="IPR017449">
    <property type="entry name" value="Pro-tRNA_synth_II"/>
</dbReference>
<dbReference type="InterPro" id="IPR033721">
    <property type="entry name" value="ProRS_core_arch_euk"/>
</dbReference>
<dbReference type="NCBIfam" id="TIGR00408">
    <property type="entry name" value="proS_fam_I"/>
    <property type="match status" value="1"/>
</dbReference>
<dbReference type="PANTHER" id="PTHR43382:SF2">
    <property type="entry name" value="BIFUNCTIONAL GLUTAMATE_PROLINE--TRNA LIGASE"/>
    <property type="match status" value="1"/>
</dbReference>
<dbReference type="PANTHER" id="PTHR43382">
    <property type="entry name" value="PROLYL-TRNA SYNTHETASE"/>
    <property type="match status" value="1"/>
</dbReference>
<dbReference type="Pfam" id="PF03129">
    <property type="entry name" value="HGTP_anticodon"/>
    <property type="match status" value="1"/>
</dbReference>
<dbReference type="Pfam" id="PF00587">
    <property type="entry name" value="tRNA-synt_2b"/>
    <property type="match status" value="1"/>
</dbReference>
<dbReference type="SMART" id="SM00946">
    <property type="entry name" value="ProRS-C_1"/>
    <property type="match status" value="1"/>
</dbReference>
<dbReference type="SUPFAM" id="SSF64586">
    <property type="entry name" value="C-terminal domain of ProRS"/>
    <property type="match status" value="1"/>
</dbReference>
<dbReference type="SUPFAM" id="SSF52954">
    <property type="entry name" value="Class II aaRS ABD-related"/>
    <property type="match status" value="1"/>
</dbReference>
<dbReference type="SUPFAM" id="SSF55681">
    <property type="entry name" value="Class II aaRS and biotin synthetases"/>
    <property type="match status" value="1"/>
</dbReference>
<dbReference type="PROSITE" id="PS50862">
    <property type="entry name" value="AA_TRNA_LIGASE_II"/>
    <property type="match status" value="1"/>
</dbReference>